<protein>
    <recommendedName>
        <fullName evidence="6">Microcephalin</fullName>
    </recommendedName>
</protein>
<proteinExistence type="evidence at protein level"/>
<gene>
    <name evidence="8" type="primary">Mcph1</name>
</gene>
<name>MCPH1_MOUSE</name>
<dbReference type="EMBL" id="AY070216">
    <property type="protein sequence ID" value="AAL50216.1"/>
    <property type="molecule type" value="mRNA"/>
</dbReference>
<dbReference type="EMBL" id="BC056924">
    <property type="protein sequence ID" value="AAH56924.1"/>
    <property type="molecule type" value="mRNA"/>
</dbReference>
<dbReference type="EMBL" id="AK042026">
    <property type="protein sequence ID" value="BAC31136.1"/>
    <property type="status" value="ALT_INIT"/>
    <property type="molecule type" value="mRNA"/>
</dbReference>
<dbReference type="EMBL" id="AK083572">
    <property type="protein sequence ID" value="BAC38955.2"/>
    <property type="molecule type" value="mRNA"/>
</dbReference>
<dbReference type="CCDS" id="CCDS22124.1"/>
<dbReference type="RefSeq" id="NP_775281.2">
    <property type="nucleotide sequence ID" value="NM_173189.2"/>
</dbReference>
<dbReference type="RefSeq" id="XP_017168280.1">
    <property type="nucleotide sequence ID" value="XM_017312791.1"/>
</dbReference>
<dbReference type="SMR" id="Q7TT79"/>
<dbReference type="BioGRID" id="232635">
    <property type="interactions" value="3"/>
</dbReference>
<dbReference type="FunCoup" id="Q7TT79">
    <property type="interactions" value="3489"/>
</dbReference>
<dbReference type="STRING" id="10090.ENSMUSP00000037000"/>
<dbReference type="iPTMnet" id="Q7TT79"/>
<dbReference type="PhosphoSitePlus" id="Q7TT79"/>
<dbReference type="jPOST" id="Q7TT79"/>
<dbReference type="PaxDb" id="10090-ENSMUSP00000037000"/>
<dbReference type="ProteomicsDB" id="292195"/>
<dbReference type="Antibodypedia" id="2158">
    <property type="antibodies" value="389 antibodies from 32 providers"/>
</dbReference>
<dbReference type="Ensembl" id="ENSMUST00000039412.15">
    <property type="protein sequence ID" value="ENSMUSP00000037000.9"/>
    <property type="gene ID" value="ENSMUSG00000039842.16"/>
</dbReference>
<dbReference type="GeneID" id="244329"/>
<dbReference type="KEGG" id="mmu:244329"/>
<dbReference type="UCSC" id="uc009kzt.1">
    <property type="organism name" value="mouse"/>
</dbReference>
<dbReference type="AGR" id="MGI:2443308"/>
<dbReference type="CTD" id="79648"/>
<dbReference type="MGI" id="MGI:2443308">
    <property type="gene designation" value="Mcph1"/>
</dbReference>
<dbReference type="VEuPathDB" id="HostDB:ENSMUSG00000039842"/>
<dbReference type="eggNOG" id="KOG4362">
    <property type="taxonomic scope" value="Eukaryota"/>
</dbReference>
<dbReference type="GeneTree" id="ENSGT00390000018842"/>
<dbReference type="HOGENOM" id="CLU_022062_0_0_1"/>
<dbReference type="InParanoid" id="Q7TT79"/>
<dbReference type="OMA" id="AMEPRMT"/>
<dbReference type="OrthoDB" id="2384350at2759"/>
<dbReference type="PhylomeDB" id="Q7TT79"/>
<dbReference type="TreeFam" id="TF332942"/>
<dbReference type="Reactome" id="R-MMU-2299718">
    <property type="pathway name" value="Condensation of Prophase Chromosomes"/>
</dbReference>
<dbReference type="BioGRID-ORCS" id="244329">
    <property type="hits" value="15 hits in 79 CRISPR screens"/>
</dbReference>
<dbReference type="ChiTaRS" id="Mcph1">
    <property type="organism name" value="mouse"/>
</dbReference>
<dbReference type="PRO" id="PR:Q7TT79"/>
<dbReference type="Proteomes" id="UP000000589">
    <property type="component" value="Chromosome 8"/>
</dbReference>
<dbReference type="RNAct" id="Q7TT79">
    <property type="molecule type" value="protein"/>
</dbReference>
<dbReference type="Bgee" id="ENSMUSG00000039842">
    <property type="expression patterns" value="Expressed in animal zygote and 197 other cell types or tissues"/>
</dbReference>
<dbReference type="ExpressionAtlas" id="Q7TT79">
    <property type="expression patterns" value="baseline and differential"/>
</dbReference>
<dbReference type="GO" id="GO:0005813">
    <property type="term" value="C:centrosome"/>
    <property type="evidence" value="ECO:0007669"/>
    <property type="project" value="UniProtKB-SubCell"/>
</dbReference>
<dbReference type="GO" id="GO:0005737">
    <property type="term" value="C:cytoplasm"/>
    <property type="evidence" value="ECO:0007669"/>
    <property type="project" value="UniProtKB-KW"/>
</dbReference>
<dbReference type="GO" id="GO:0042802">
    <property type="term" value="F:identical protein binding"/>
    <property type="evidence" value="ECO:0007669"/>
    <property type="project" value="Ensembl"/>
</dbReference>
<dbReference type="GO" id="GO:0060348">
    <property type="term" value="P:bone development"/>
    <property type="evidence" value="ECO:0000315"/>
    <property type="project" value="MGI"/>
</dbReference>
<dbReference type="GO" id="GO:0021987">
    <property type="term" value="P:cerebral cortex development"/>
    <property type="evidence" value="ECO:0000315"/>
    <property type="project" value="MGI"/>
</dbReference>
<dbReference type="GO" id="GO:0000132">
    <property type="term" value="P:establishment of mitotic spindle orientation"/>
    <property type="evidence" value="ECO:0000315"/>
    <property type="project" value="MGI"/>
</dbReference>
<dbReference type="GO" id="GO:0000122">
    <property type="term" value="P:negative regulation of transcription by RNA polymerase II"/>
    <property type="evidence" value="ECO:0007669"/>
    <property type="project" value="Ensembl"/>
</dbReference>
<dbReference type="GO" id="GO:0097150">
    <property type="term" value="P:neuronal stem cell population maintenance"/>
    <property type="evidence" value="ECO:0000315"/>
    <property type="project" value="MGI"/>
</dbReference>
<dbReference type="GO" id="GO:0071539">
    <property type="term" value="P:protein localization to centrosome"/>
    <property type="evidence" value="ECO:0000315"/>
    <property type="project" value="MGI"/>
</dbReference>
<dbReference type="GO" id="GO:0046605">
    <property type="term" value="P:regulation of centrosome cycle"/>
    <property type="evidence" value="ECO:0000315"/>
    <property type="project" value="MGI"/>
</dbReference>
<dbReference type="GO" id="GO:0060623">
    <property type="term" value="P:regulation of chromosome condensation"/>
    <property type="evidence" value="ECO:0000315"/>
    <property type="project" value="MGI"/>
</dbReference>
<dbReference type="GO" id="GO:0010468">
    <property type="term" value="P:regulation of gene expression"/>
    <property type="evidence" value="ECO:0000315"/>
    <property type="project" value="MGI"/>
</dbReference>
<dbReference type="GO" id="GO:0050727">
    <property type="term" value="P:regulation of inflammatory response"/>
    <property type="evidence" value="ECO:0000315"/>
    <property type="project" value="MGI"/>
</dbReference>
<dbReference type="CDD" id="cd17716">
    <property type="entry name" value="BRCT_microcephalin_rpt1"/>
    <property type="match status" value="1"/>
</dbReference>
<dbReference type="CDD" id="cd17736">
    <property type="entry name" value="BRCT_microcephalin_rpt2"/>
    <property type="match status" value="1"/>
</dbReference>
<dbReference type="CDD" id="cd17751">
    <property type="entry name" value="BRCT_microcephalin_rpt3"/>
    <property type="match status" value="1"/>
</dbReference>
<dbReference type="FunFam" id="3.40.50.10190:FF:000047">
    <property type="entry name" value="Microcephalin"/>
    <property type="match status" value="1"/>
</dbReference>
<dbReference type="FunFam" id="3.40.50.10190:FF:000055">
    <property type="entry name" value="Microcephalin"/>
    <property type="match status" value="1"/>
</dbReference>
<dbReference type="Gene3D" id="3.40.50.10190">
    <property type="entry name" value="BRCT domain"/>
    <property type="match status" value="3"/>
</dbReference>
<dbReference type="InterPro" id="IPR001357">
    <property type="entry name" value="BRCT_dom"/>
</dbReference>
<dbReference type="InterPro" id="IPR036420">
    <property type="entry name" value="BRCT_dom_sf"/>
</dbReference>
<dbReference type="InterPro" id="IPR022047">
    <property type="entry name" value="Microcephalin-like"/>
</dbReference>
<dbReference type="InterPro" id="IPR029504">
    <property type="entry name" value="Microcephalin_mammal"/>
</dbReference>
<dbReference type="PANTHER" id="PTHR14625">
    <property type="entry name" value="MICROCEPHALIN"/>
    <property type="match status" value="1"/>
</dbReference>
<dbReference type="PANTHER" id="PTHR14625:SF3">
    <property type="entry name" value="MICROCEPHALIN"/>
    <property type="match status" value="1"/>
</dbReference>
<dbReference type="Pfam" id="PF00533">
    <property type="entry name" value="BRCT"/>
    <property type="match status" value="1"/>
</dbReference>
<dbReference type="Pfam" id="PF16589">
    <property type="entry name" value="BRCT_2"/>
    <property type="match status" value="1"/>
</dbReference>
<dbReference type="Pfam" id="PF12258">
    <property type="entry name" value="Microcephalin"/>
    <property type="match status" value="1"/>
</dbReference>
<dbReference type="Pfam" id="PF12738">
    <property type="entry name" value="PTCB-BRCT"/>
    <property type="match status" value="1"/>
</dbReference>
<dbReference type="SMART" id="SM00292">
    <property type="entry name" value="BRCT"/>
    <property type="match status" value="3"/>
</dbReference>
<dbReference type="SUPFAM" id="SSF52113">
    <property type="entry name" value="BRCT domain"/>
    <property type="match status" value="3"/>
</dbReference>
<dbReference type="PROSITE" id="PS50172">
    <property type="entry name" value="BRCT"/>
    <property type="match status" value="3"/>
</dbReference>
<accession>Q7TT79</accession>
<accession>Q8BNI9</accession>
<accession>Q8C9I7</accession>
<evidence type="ECO:0000250" key="1"/>
<evidence type="ECO:0000250" key="2">
    <source>
        <dbReference type="UniProtKB" id="Q8NEM0"/>
    </source>
</evidence>
<evidence type="ECO:0000255" key="3">
    <source>
        <dbReference type="PROSITE-ProRule" id="PRU00033"/>
    </source>
</evidence>
<evidence type="ECO:0000256" key="4">
    <source>
        <dbReference type="SAM" id="MobiDB-lite"/>
    </source>
</evidence>
<evidence type="ECO:0000269" key="5">
    <source>
    </source>
</evidence>
<evidence type="ECO:0000303" key="6">
    <source>
    </source>
</evidence>
<evidence type="ECO:0000305" key="7"/>
<evidence type="ECO:0000312" key="8">
    <source>
        <dbReference type="MGI" id="MGI:2443308"/>
    </source>
</evidence>
<evidence type="ECO:0007744" key="9">
    <source>
    </source>
</evidence>
<sequence length="822" mass="90373">MEASGGVGGAFLKDVVAYVEVWSSKGTENYSRTFAKQLEDMGATVSKTLNKQVTHVIFKDGYQSTWDKAQKTGAKLVSVLWVEKCRMAGALVDESLFPAVNTDEHLPNLSRKKHKCMQPKDFILKTPENDKRLQKKFEKMAEELQRQKAALDDDVPVLLFESPRSLVYSSPVNVMKRRLQDMKEKRENLSPTSSQMLEQSQQNPCVSLFETSLNISHQPLSSDESFASGSHSSFGDSCGDQERKLGRSANEMTTVTCPSSPVLRASSFYGSASPNHLRQPRPQKAPDSPSKESINCQKDATGAVADSERKQAAGVSQGVPDEKLCLSPTMSIIEEHQVRLGPKNSSAKRKRAADLGSSPKGKLKKRYKRKSALAIQLFKSDQSPPSTIRLIPGTPDVEASSYEDYFSPDNLKERNSERLPPEAQQLASPSLFHCRGLSKWERRNMLEMCDFTCIGEKHRSISSISDLISKSASSLEKPVKEEVNTASTCLLLVETSANDSPGLCSQPGPQLRDDTGPEGSSHPDTLSSSAHHITPLKGNSTETRDPGDGKGSPKEGSTPPASASPEDEVHICNLSLGEDCNVEKSVEEKENIATGYSESVKNGPGRPDPSDSSCTGLVRPQQKPKKSEKEEKPTRTLVMTSMPSEKQTLIIQVVSTLKGFSFAPEVCETTTHVLVGKSARTLNVLMGIARGCWILSYEWVLLSLELGHWISEEPFELSETFPAAPICRLERHLSTQQYQGTLFANQPKMFIAPASSPPRAKLCELVLLCGGQVSPAPQLASLIIGPYKGKKKARIQYLSEKWVLDSITQHKICDFNNYQLLQ</sequence>
<comment type="function">
    <text evidence="1">Implicated in chromosome condensation and DNA damage induced cellular responses. May play a role in neurogenesis and regulation of the size of the cerebral cortex (By similarity).</text>
</comment>
<comment type="subunit">
    <text evidence="1">Interacts with CDC27 and maybe other components of the APC/C complex. Interacts with histone variant H2AX under DNA damage conditions (By similarity).</text>
</comment>
<comment type="subcellular location">
    <subcellularLocation>
        <location evidence="1">Cytoplasm</location>
        <location evidence="1">Cytoskeleton</location>
        <location evidence="1">Microtubule organizing center</location>
        <location evidence="1">Centrosome</location>
    </subcellularLocation>
</comment>
<comment type="tissue specificity">
    <text evidence="5">High levels of expression are found in the developing forebrain and, in particular, in the walls of the lateral ventricles.</text>
</comment>
<comment type="domain">
    <text evidence="1">BRCT domain 1 is required to prevent abnormal chromosome condensation. It binds directly to the SWI-SNF chromatin remodeling complex (By similarity).</text>
</comment>
<comment type="domain">
    <text evidence="1">BRCT domains 2 and 3 recognize phosphoserine/phosphothreonine marks on proteins with high selectivity, and mediate interaction with phosphorylated CDC27. They also mediate the dual recognition of phosphoserine and phosphotyrosine in the C-terminal tail of histone H2AX (By similarity).</text>
</comment>
<comment type="sequence caution" evidence="7">
    <conflict type="erroneous initiation">
        <sequence resource="EMBL-CDS" id="BAC31136"/>
    </conflict>
</comment>
<reference key="1">
    <citation type="journal article" date="2002" name="Am. J. Hum. Genet.">
        <title>Identification of microcephalin, a protein implicated in determining the size of the human brain.</title>
        <authorList>
            <person name="Jackson A.P."/>
            <person name="Eastwood H."/>
            <person name="Bell S.M."/>
            <person name="Toomes C."/>
            <person name="Adu J."/>
            <person name="Carr I.M."/>
            <person name="Roberts E."/>
            <person name="Hampshire D.J."/>
            <person name="Crow Y.J."/>
            <person name="Mighell A.J."/>
            <person name="Karbani G."/>
            <person name="Jafri H."/>
            <person name="Rashid Y."/>
            <person name="Mueller R.F."/>
            <person name="Markham A.F."/>
            <person name="Woods C.G."/>
        </authorList>
    </citation>
    <scope>NUCLEOTIDE SEQUENCE [MRNA]</scope>
    <scope>TISSUE SPECIFICITY</scope>
    <source>
        <strain>C57BL/6J X CBA/J</strain>
    </source>
</reference>
<reference key="2">
    <citation type="journal article" date="2004" name="Genome Res.">
        <title>The status, quality, and expansion of the NIH full-length cDNA project: the Mammalian Gene Collection (MGC).</title>
        <authorList>
            <consortium name="The MGC Project Team"/>
        </authorList>
    </citation>
    <scope>NUCLEOTIDE SEQUENCE [LARGE SCALE MRNA]</scope>
    <source>
        <strain>C57BL/6J</strain>
        <tissue>Brain</tissue>
    </source>
</reference>
<reference key="3">
    <citation type="journal article" date="2005" name="Science">
        <title>The transcriptional landscape of the mammalian genome.</title>
        <authorList>
            <person name="Carninci P."/>
            <person name="Kasukawa T."/>
            <person name="Katayama S."/>
            <person name="Gough J."/>
            <person name="Frith M.C."/>
            <person name="Maeda N."/>
            <person name="Oyama R."/>
            <person name="Ravasi T."/>
            <person name="Lenhard B."/>
            <person name="Wells C."/>
            <person name="Kodzius R."/>
            <person name="Shimokawa K."/>
            <person name="Bajic V.B."/>
            <person name="Brenner S.E."/>
            <person name="Batalov S."/>
            <person name="Forrest A.R."/>
            <person name="Zavolan M."/>
            <person name="Davis M.J."/>
            <person name="Wilming L.G."/>
            <person name="Aidinis V."/>
            <person name="Allen J.E."/>
            <person name="Ambesi-Impiombato A."/>
            <person name="Apweiler R."/>
            <person name="Aturaliya R.N."/>
            <person name="Bailey T.L."/>
            <person name="Bansal M."/>
            <person name="Baxter L."/>
            <person name="Beisel K.W."/>
            <person name="Bersano T."/>
            <person name="Bono H."/>
            <person name="Chalk A.M."/>
            <person name="Chiu K.P."/>
            <person name="Choudhary V."/>
            <person name="Christoffels A."/>
            <person name="Clutterbuck D.R."/>
            <person name="Crowe M.L."/>
            <person name="Dalla E."/>
            <person name="Dalrymple B.P."/>
            <person name="de Bono B."/>
            <person name="Della Gatta G."/>
            <person name="di Bernardo D."/>
            <person name="Down T."/>
            <person name="Engstrom P."/>
            <person name="Fagiolini M."/>
            <person name="Faulkner G."/>
            <person name="Fletcher C.F."/>
            <person name="Fukushima T."/>
            <person name="Furuno M."/>
            <person name="Futaki S."/>
            <person name="Gariboldi M."/>
            <person name="Georgii-Hemming P."/>
            <person name="Gingeras T.R."/>
            <person name="Gojobori T."/>
            <person name="Green R.E."/>
            <person name="Gustincich S."/>
            <person name="Harbers M."/>
            <person name="Hayashi Y."/>
            <person name="Hensch T.K."/>
            <person name="Hirokawa N."/>
            <person name="Hill D."/>
            <person name="Huminiecki L."/>
            <person name="Iacono M."/>
            <person name="Ikeo K."/>
            <person name="Iwama A."/>
            <person name="Ishikawa T."/>
            <person name="Jakt M."/>
            <person name="Kanapin A."/>
            <person name="Katoh M."/>
            <person name="Kawasawa Y."/>
            <person name="Kelso J."/>
            <person name="Kitamura H."/>
            <person name="Kitano H."/>
            <person name="Kollias G."/>
            <person name="Krishnan S.P."/>
            <person name="Kruger A."/>
            <person name="Kummerfeld S.K."/>
            <person name="Kurochkin I.V."/>
            <person name="Lareau L.F."/>
            <person name="Lazarevic D."/>
            <person name="Lipovich L."/>
            <person name="Liu J."/>
            <person name="Liuni S."/>
            <person name="McWilliam S."/>
            <person name="Madan Babu M."/>
            <person name="Madera M."/>
            <person name="Marchionni L."/>
            <person name="Matsuda H."/>
            <person name="Matsuzawa S."/>
            <person name="Miki H."/>
            <person name="Mignone F."/>
            <person name="Miyake S."/>
            <person name="Morris K."/>
            <person name="Mottagui-Tabar S."/>
            <person name="Mulder N."/>
            <person name="Nakano N."/>
            <person name="Nakauchi H."/>
            <person name="Ng P."/>
            <person name="Nilsson R."/>
            <person name="Nishiguchi S."/>
            <person name="Nishikawa S."/>
            <person name="Nori F."/>
            <person name="Ohara O."/>
            <person name="Okazaki Y."/>
            <person name="Orlando V."/>
            <person name="Pang K.C."/>
            <person name="Pavan W.J."/>
            <person name="Pavesi G."/>
            <person name="Pesole G."/>
            <person name="Petrovsky N."/>
            <person name="Piazza S."/>
            <person name="Reed J."/>
            <person name="Reid J.F."/>
            <person name="Ring B.Z."/>
            <person name="Ringwald M."/>
            <person name="Rost B."/>
            <person name="Ruan Y."/>
            <person name="Salzberg S.L."/>
            <person name="Sandelin A."/>
            <person name="Schneider C."/>
            <person name="Schoenbach C."/>
            <person name="Sekiguchi K."/>
            <person name="Semple C.A."/>
            <person name="Seno S."/>
            <person name="Sessa L."/>
            <person name="Sheng Y."/>
            <person name="Shibata Y."/>
            <person name="Shimada H."/>
            <person name="Shimada K."/>
            <person name="Silva D."/>
            <person name="Sinclair B."/>
            <person name="Sperling S."/>
            <person name="Stupka E."/>
            <person name="Sugiura K."/>
            <person name="Sultana R."/>
            <person name="Takenaka Y."/>
            <person name="Taki K."/>
            <person name="Tammoja K."/>
            <person name="Tan S.L."/>
            <person name="Tang S."/>
            <person name="Taylor M.S."/>
            <person name="Tegner J."/>
            <person name="Teichmann S.A."/>
            <person name="Ueda H.R."/>
            <person name="van Nimwegen E."/>
            <person name="Verardo R."/>
            <person name="Wei C.L."/>
            <person name="Yagi K."/>
            <person name="Yamanishi H."/>
            <person name="Zabarovsky E."/>
            <person name="Zhu S."/>
            <person name="Zimmer A."/>
            <person name="Hide W."/>
            <person name="Bult C."/>
            <person name="Grimmond S.M."/>
            <person name="Teasdale R.D."/>
            <person name="Liu E.T."/>
            <person name="Brusic V."/>
            <person name="Quackenbush J."/>
            <person name="Wahlestedt C."/>
            <person name="Mattick J.S."/>
            <person name="Hume D.A."/>
            <person name="Kai C."/>
            <person name="Sasaki D."/>
            <person name="Tomaru Y."/>
            <person name="Fukuda S."/>
            <person name="Kanamori-Katayama M."/>
            <person name="Suzuki M."/>
            <person name="Aoki J."/>
            <person name="Arakawa T."/>
            <person name="Iida J."/>
            <person name="Imamura K."/>
            <person name="Itoh M."/>
            <person name="Kato T."/>
            <person name="Kawaji H."/>
            <person name="Kawagashira N."/>
            <person name="Kawashima T."/>
            <person name="Kojima M."/>
            <person name="Kondo S."/>
            <person name="Konno H."/>
            <person name="Nakano K."/>
            <person name="Ninomiya N."/>
            <person name="Nishio T."/>
            <person name="Okada M."/>
            <person name="Plessy C."/>
            <person name="Shibata K."/>
            <person name="Shiraki T."/>
            <person name="Suzuki S."/>
            <person name="Tagami M."/>
            <person name="Waki K."/>
            <person name="Watahiki A."/>
            <person name="Okamura-Oho Y."/>
            <person name="Suzuki H."/>
            <person name="Kawai J."/>
            <person name="Hayashizaki Y."/>
        </authorList>
    </citation>
    <scope>NUCLEOTIDE SEQUENCE [LARGE SCALE MRNA] OF 1-742</scope>
    <source>
        <strain>C57BL/6J</strain>
        <tissue>Thymus</tissue>
    </source>
</reference>
<reference key="4">
    <citation type="journal article" date="2010" name="Cell">
        <title>A tissue-specific atlas of mouse protein phosphorylation and expression.</title>
        <authorList>
            <person name="Huttlin E.L."/>
            <person name="Jedrychowski M.P."/>
            <person name="Elias J.E."/>
            <person name="Goswami T."/>
            <person name="Rad R."/>
            <person name="Beausoleil S.A."/>
            <person name="Villen J."/>
            <person name="Haas W."/>
            <person name="Sowa M.E."/>
            <person name="Gygi S.P."/>
        </authorList>
    </citation>
    <scope>PHOSPHORYLATION [LARGE SCALE ANALYSIS] AT SER-273 AND SER-290</scope>
    <scope>IDENTIFICATION BY MASS SPECTROMETRY [LARGE SCALE ANALYSIS]</scope>
    <source>
        <tissue>Spleen</tissue>
    </source>
</reference>
<feature type="chain" id="PRO_0000096299" description="Microcephalin">
    <location>
        <begin position="1"/>
        <end position="822"/>
    </location>
</feature>
<feature type="domain" description="BRCT 1" evidence="3">
    <location>
        <begin position="10"/>
        <end position="99"/>
    </location>
</feature>
<feature type="domain" description="BRCT 2" evidence="3">
    <location>
        <begin position="627"/>
        <end position="717"/>
    </location>
</feature>
<feature type="domain" description="BRCT 3" evidence="3">
    <location>
        <begin position="738"/>
        <end position="820"/>
    </location>
</feature>
<feature type="region of interest" description="Disordered" evidence="4">
    <location>
        <begin position="182"/>
        <end position="203"/>
    </location>
</feature>
<feature type="region of interest" description="Disordered" evidence="4">
    <location>
        <begin position="219"/>
        <end position="243"/>
    </location>
</feature>
<feature type="region of interest" description="Disordered" evidence="4">
    <location>
        <begin position="266"/>
        <end position="295"/>
    </location>
</feature>
<feature type="region of interest" description="Disordered" evidence="4">
    <location>
        <begin position="335"/>
        <end position="366"/>
    </location>
</feature>
<feature type="region of interest" description="Disordered" evidence="4">
    <location>
        <begin position="498"/>
        <end position="567"/>
    </location>
</feature>
<feature type="region of interest" description="Disordered" evidence="4">
    <location>
        <begin position="594"/>
        <end position="636"/>
    </location>
</feature>
<feature type="compositionally biased region" description="Polar residues" evidence="4">
    <location>
        <begin position="189"/>
        <end position="203"/>
    </location>
</feature>
<feature type="compositionally biased region" description="Polar residues" evidence="4">
    <location>
        <begin position="219"/>
        <end position="235"/>
    </location>
</feature>
<feature type="compositionally biased region" description="Polar residues" evidence="4">
    <location>
        <begin position="522"/>
        <end position="541"/>
    </location>
</feature>
<feature type="compositionally biased region" description="Basic and acidic residues" evidence="4">
    <location>
        <begin position="542"/>
        <end position="553"/>
    </location>
</feature>
<feature type="compositionally biased region" description="Basic and acidic residues" evidence="4">
    <location>
        <begin position="625"/>
        <end position="634"/>
    </location>
</feature>
<feature type="modified residue" description="Phosphoserine" evidence="9">
    <location>
        <position position="273"/>
    </location>
</feature>
<feature type="modified residue" description="Phosphoserine" evidence="9">
    <location>
        <position position="290"/>
    </location>
</feature>
<feature type="modified residue" description="Phosphoserine" evidence="2">
    <location>
        <position position="327"/>
    </location>
</feature>
<feature type="modified residue" description="Phosphothreonine" evidence="2">
    <location>
        <position position="329"/>
    </location>
</feature>
<feature type="sequence conflict" description="In Ref. 3; BAC31136." evidence="7" ref="3">
    <original>ICRLERHLSTQQYQGTL</original>
    <variation>KYLSVSGQSDKVTWVLV</variation>
    <location>
        <begin position="726"/>
        <end position="742"/>
    </location>
</feature>
<keyword id="KW-0963">Cytoplasm</keyword>
<keyword id="KW-0206">Cytoskeleton</keyword>
<keyword id="KW-0597">Phosphoprotein</keyword>
<keyword id="KW-1185">Reference proteome</keyword>
<keyword id="KW-0677">Repeat</keyword>
<organism>
    <name type="scientific">Mus musculus</name>
    <name type="common">Mouse</name>
    <dbReference type="NCBI Taxonomy" id="10090"/>
    <lineage>
        <taxon>Eukaryota</taxon>
        <taxon>Metazoa</taxon>
        <taxon>Chordata</taxon>
        <taxon>Craniata</taxon>
        <taxon>Vertebrata</taxon>
        <taxon>Euteleostomi</taxon>
        <taxon>Mammalia</taxon>
        <taxon>Eutheria</taxon>
        <taxon>Euarchontoglires</taxon>
        <taxon>Glires</taxon>
        <taxon>Rodentia</taxon>
        <taxon>Myomorpha</taxon>
        <taxon>Muroidea</taxon>
        <taxon>Muridae</taxon>
        <taxon>Murinae</taxon>
        <taxon>Mus</taxon>
        <taxon>Mus</taxon>
    </lineage>
</organism>